<keyword id="KW-0963">Cytoplasm</keyword>
<keyword id="KW-0448">Lipopolysaccharide biosynthesis</keyword>
<keyword id="KW-0808">Transferase</keyword>
<evidence type="ECO:0000255" key="1">
    <source>
        <dbReference type="HAMAP-Rule" id="MF_00056"/>
    </source>
</evidence>
<comment type="catalytic activity">
    <reaction evidence="1">
        <text>D-arabinose 5-phosphate + phosphoenolpyruvate + H2O = 3-deoxy-alpha-D-manno-2-octulosonate-8-phosphate + phosphate</text>
        <dbReference type="Rhea" id="RHEA:14053"/>
        <dbReference type="ChEBI" id="CHEBI:15377"/>
        <dbReference type="ChEBI" id="CHEBI:43474"/>
        <dbReference type="ChEBI" id="CHEBI:57693"/>
        <dbReference type="ChEBI" id="CHEBI:58702"/>
        <dbReference type="ChEBI" id="CHEBI:85985"/>
        <dbReference type="EC" id="2.5.1.55"/>
    </reaction>
</comment>
<comment type="pathway">
    <text evidence="1">Carbohydrate biosynthesis; 3-deoxy-D-manno-octulosonate biosynthesis; 3-deoxy-D-manno-octulosonate from D-ribulose 5-phosphate: step 2/3.</text>
</comment>
<comment type="pathway">
    <text evidence="1">Bacterial outer membrane biogenesis; lipopolysaccharide biosynthesis.</text>
</comment>
<comment type="subcellular location">
    <subcellularLocation>
        <location evidence="1">Cytoplasm</location>
    </subcellularLocation>
</comment>
<comment type="similarity">
    <text evidence="1">Belongs to the KdsA family.</text>
</comment>
<proteinExistence type="inferred from homology"/>
<sequence length="273" mass="29368">MQHPTPDALHARLAARRFILAGPCALEDFDVAMETAHAVREAAEAAGLFAVFKSSWDKANRTSITSFRGPGLVRGMEWLARIREESGLPVVTDIHLPEQAAPVAEVADIIQIPAFLCRQTDLLVAAAATGRVVNVKKGQFVAPWDMRPAVEKLRAAGNERILLTERGTSFGYNNLVVDYRSIPTMQGFGVPVVFDATHSVQLPGGLGGSSGGERRHVPVLARAAVAAGVDGVFLECHPDPDKALCDGPNSWPLDRLPALLKELSALWSLEHVC</sequence>
<dbReference type="EC" id="2.5.1.55" evidence="1"/>
<dbReference type="EMBL" id="CP000527">
    <property type="protein sequence ID" value="ABM28527.1"/>
    <property type="molecule type" value="Genomic_DNA"/>
</dbReference>
<dbReference type="RefSeq" id="WP_011792317.1">
    <property type="nucleotide sequence ID" value="NC_008751.1"/>
</dbReference>
<dbReference type="SMR" id="A1VDL1"/>
<dbReference type="KEGG" id="dvl:Dvul_1510"/>
<dbReference type="HOGENOM" id="CLU_036666_0_0_7"/>
<dbReference type="UniPathway" id="UPA00030"/>
<dbReference type="UniPathway" id="UPA00357">
    <property type="reaction ID" value="UER00474"/>
</dbReference>
<dbReference type="Proteomes" id="UP000009173">
    <property type="component" value="Chromosome"/>
</dbReference>
<dbReference type="GO" id="GO:0005737">
    <property type="term" value="C:cytoplasm"/>
    <property type="evidence" value="ECO:0007669"/>
    <property type="project" value="UniProtKB-SubCell"/>
</dbReference>
<dbReference type="GO" id="GO:0008676">
    <property type="term" value="F:3-deoxy-8-phosphooctulonate synthase activity"/>
    <property type="evidence" value="ECO:0007669"/>
    <property type="project" value="UniProtKB-UniRule"/>
</dbReference>
<dbReference type="GO" id="GO:0019294">
    <property type="term" value="P:keto-3-deoxy-D-manno-octulosonic acid biosynthetic process"/>
    <property type="evidence" value="ECO:0007669"/>
    <property type="project" value="UniProtKB-UniRule"/>
</dbReference>
<dbReference type="Gene3D" id="3.20.20.70">
    <property type="entry name" value="Aldolase class I"/>
    <property type="match status" value="1"/>
</dbReference>
<dbReference type="HAMAP" id="MF_00056">
    <property type="entry name" value="KDO8P_synth"/>
    <property type="match status" value="1"/>
</dbReference>
<dbReference type="InterPro" id="IPR013785">
    <property type="entry name" value="Aldolase_TIM"/>
</dbReference>
<dbReference type="InterPro" id="IPR006218">
    <property type="entry name" value="DAHP1/KDSA"/>
</dbReference>
<dbReference type="InterPro" id="IPR006269">
    <property type="entry name" value="KDO8P_synthase"/>
</dbReference>
<dbReference type="NCBIfam" id="TIGR01362">
    <property type="entry name" value="KDO8P_synth"/>
    <property type="match status" value="1"/>
</dbReference>
<dbReference type="NCBIfam" id="NF003543">
    <property type="entry name" value="PRK05198.1"/>
    <property type="match status" value="1"/>
</dbReference>
<dbReference type="PANTHER" id="PTHR21057">
    <property type="entry name" value="PHOSPHO-2-DEHYDRO-3-DEOXYHEPTONATE ALDOLASE"/>
    <property type="match status" value="1"/>
</dbReference>
<dbReference type="Pfam" id="PF00793">
    <property type="entry name" value="DAHP_synth_1"/>
    <property type="match status" value="1"/>
</dbReference>
<dbReference type="SUPFAM" id="SSF51569">
    <property type="entry name" value="Aldolase"/>
    <property type="match status" value="1"/>
</dbReference>
<organism>
    <name type="scientific">Nitratidesulfovibrio vulgaris (strain DP4)</name>
    <name type="common">Desulfovibrio vulgaris</name>
    <dbReference type="NCBI Taxonomy" id="391774"/>
    <lineage>
        <taxon>Bacteria</taxon>
        <taxon>Pseudomonadati</taxon>
        <taxon>Thermodesulfobacteriota</taxon>
        <taxon>Desulfovibrionia</taxon>
        <taxon>Desulfovibrionales</taxon>
        <taxon>Desulfovibrionaceae</taxon>
        <taxon>Nitratidesulfovibrio</taxon>
    </lineage>
</organism>
<protein>
    <recommendedName>
        <fullName evidence="1">2-dehydro-3-deoxyphosphooctonate aldolase</fullName>
        <ecNumber evidence="1">2.5.1.55</ecNumber>
    </recommendedName>
    <alternativeName>
        <fullName evidence="1">3-deoxy-D-manno-octulosonic acid 8-phosphate synthase</fullName>
    </alternativeName>
    <alternativeName>
        <fullName evidence="1">KDO-8-phosphate synthase</fullName>
        <shortName evidence="1">KDO 8-P synthase</shortName>
        <shortName evidence="1">KDOPS</shortName>
    </alternativeName>
    <alternativeName>
        <fullName evidence="1">Phospho-2-dehydro-3-deoxyoctonate aldolase</fullName>
    </alternativeName>
</protein>
<feature type="chain" id="PRO_0000304447" description="2-dehydro-3-deoxyphosphooctonate aldolase">
    <location>
        <begin position="1"/>
        <end position="273"/>
    </location>
</feature>
<reference key="1">
    <citation type="journal article" date="2009" name="Environ. Microbiol.">
        <title>Contribution of mobile genetic elements to Desulfovibrio vulgaris genome plasticity.</title>
        <authorList>
            <person name="Walker C.B."/>
            <person name="Stolyar S."/>
            <person name="Chivian D."/>
            <person name="Pinel N."/>
            <person name="Gabster J.A."/>
            <person name="Dehal P.S."/>
            <person name="He Z."/>
            <person name="Yang Z.K."/>
            <person name="Yen H.C."/>
            <person name="Zhou J."/>
            <person name="Wall J.D."/>
            <person name="Hazen T.C."/>
            <person name="Arkin A.P."/>
            <person name="Stahl D.A."/>
        </authorList>
    </citation>
    <scope>NUCLEOTIDE SEQUENCE [LARGE SCALE GENOMIC DNA]</scope>
    <source>
        <strain>DP4</strain>
    </source>
</reference>
<gene>
    <name evidence="1" type="primary">kdsA</name>
    <name type="ordered locus">Dvul_1510</name>
</gene>
<accession>A1VDL1</accession>
<name>KDSA_NITV4</name>